<gene>
    <name type="primary">IX</name>
</gene>
<protein>
    <recommendedName>
        <fullName>Tail virion protein G9P</fullName>
    </recommendedName>
    <alternativeName>
        <fullName>Coat protein C, polypeptide II</fullName>
    </alternativeName>
    <alternativeName>
        <fullName>G9P</fullName>
    </alternativeName>
</protein>
<proteinExistence type="inferred from homology"/>
<feature type="chain" id="PRO_0000098181" description="Tail virion protein G9P">
    <location>
        <begin position="1"/>
        <end position="32"/>
    </location>
</feature>
<feature type="transmembrane region" description="Helical" evidence="2">
    <location>
        <begin position="8"/>
        <end position="24"/>
    </location>
</feature>
<dbReference type="EMBL" id="J02451">
    <property type="protein sequence ID" value="AAA32307.1"/>
    <property type="molecule type" value="Genomic_DNA"/>
</dbReference>
<dbReference type="PIR" id="A04279">
    <property type="entry name" value="Z9BPFD"/>
</dbReference>
<dbReference type="SMR" id="P69536"/>
<dbReference type="KEGG" id="vg:22475002"/>
<dbReference type="Proteomes" id="UP000001836">
    <property type="component" value="Genome"/>
</dbReference>
<dbReference type="GO" id="GO:0033644">
    <property type="term" value="C:host cell membrane"/>
    <property type="evidence" value="ECO:0007669"/>
    <property type="project" value="UniProtKB-SubCell"/>
</dbReference>
<dbReference type="GO" id="GO:0016020">
    <property type="term" value="C:membrane"/>
    <property type="evidence" value="ECO:0007669"/>
    <property type="project" value="UniProtKB-KW"/>
</dbReference>
<dbReference type="GO" id="GO:0044423">
    <property type="term" value="C:virion component"/>
    <property type="evidence" value="ECO:0007669"/>
    <property type="project" value="UniProtKB-KW"/>
</dbReference>
<evidence type="ECO:0000250" key="1"/>
<evidence type="ECO:0000255" key="2"/>
<evidence type="ECO:0000305" key="3"/>
<organismHost>
    <name type="scientific">Escherichia coli</name>
    <dbReference type="NCBI Taxonomy" id="562"/>
</organismHost>
<sequence>MSVLVYSFASFVLGWCLRSGITYFTRLMETSS</sequence>
<organism>
    <name type="scientific">Enterobacteria phage fd</name>
    <name type="common">Bacteriophage fd</name>
    <dbReference type="NCBI Taxonomy" id="2847073"/>
    <lineage>
        <taxon>Viruses</taxon>
        <taxon>Monodnaviria</taxon>
        <taxon>Loebvirae</taxon>
        <taxon>Hofneiviricota</taxon>
        <taxon>Faserviricetes</taxon>
        <taxon>Tubulavirales</taxon>
        <taxon>Inoviridae</taxon>
        <taxon>Inovirus</taxon>
        <taxon>Enterobacteria phage M13</taxon>
    </lineage>
</organism>
<comment type="function">
    <text evidence="1">May initiate with G7P the virion concomitant assembly-budding process, by interacting with the packaging signal of the viral genome. The assembly-budding takes place at the host inner membrane. In turn, G7P and G9P are present at the end of the filamentous virion that emerges first from the bacterial host (By similarity).</text>
</comment>
<comment type="subcellular location">
    <subcellularLocation>
        <location evidence="3">Virion</location>
    </subcellularLocation>
    <subcellularLocation>
        <location evidence="3">Host membrane</location>
        <topology evidence="3">Single-pass membrane protein</topology>
    </subcellularLocation>
    <text evidence="1">Prior to assembly, is found associated with the bacterial host inner membrane. There are about five copies of this protein per mature phage that are located on the tail side of the filamentous virion with G7P (By similarity).</text>
</comment>
<comment type="similarity">
    <text evidence="3">Belongs to the inovirus G9P protein family.</text>
</comment>
<name>G9P_BPFD</name>
<accession>P69536</accession>
<accession>P03677</accession>
<reference key="1">
    <citation type="journal article" date="1978" name="Nucleic Acids Res.">
        <title>Nucleotide sequence of bacteriophage fd DNA.</title>
        <authorList>
            <person name="Beck E."/>
            <person name="Sommer R."/>
            <person name="Auerswald E.A."/>
            <person name="Kurz C."/>
            <person name="Zink B."/>
            <person name="Osterburg G."/>
            <person name="Schaller H."/>
            <person name="Sugimoto K."/>
            <person name="Sugisaki H."/>
            <person name="Okamoto T."/>
            <person name="Takanami M."/>
        </authorList>
    </citation>
    <scope>NUCLEOTIDE SEQUENCE [GENOMIC DNA]</scope>
    <source>
        <strain>478 / Heidelberg</strain>
    </source>
</reference>
<keyword id="KW-1043">Host membrane</keyword>
<keyword id="KW-0472">Membrane</keyword>
<keyword id="KW-0812">Transmembrane</keyword>
<keyword id="KW-1133">Transmembrane helix</keyword>
<keyword id="KW-0946">Virion</keyword>